<reference evidence="10 12" key="1">
    <citation type="journal article" date="2004" name="J. Biol. Chem.">
        <title>A novel secreted, cell-surface glycoprotein containing multiple epidermal growth factor-like repeats and one CUB domain is highly expressed in primary osteoblasts and bones.</title>
        <authorList>
            <person name="Wu B.-T."/>
            <person name="Su Y.-H."/>
            <person name="Tsai M.-T."/>
            <person name="Wasserman S.M."/>
            <person name="Topper J.N."/>
            <person name="Yang R.-B."/>
        </authorList>
    </citation>
    <scope>NUCLEOTIDE SEQUENCE [MRNA] (ISOFORM 1)</scope>
    <scope>TISSUE SPECIFICITY</scope>
    <scope>GLYCOSYLATION</scope>
    <source>
        <strain evidence="12">C57BL/6J</strain>
    </source>
</reference>
<reference key="2">
    <citation type="journal article" date="2009" name="PLoS Biol.">
        <title>Lineage-specific biology revealed by a finished genome assembly of the mouse.</title>
        <authorList>
            <person name="Church D.M."/>
            <person name="Goodstadt L."/>
            <person name="Hillier L.W."/>
            <person name="Zody M.C."/>
            <person name="Goldstein S."/>
            <person name="She X."/>
            <person name="Bult C.J."/>
            <person name="Agarwala R."/>
            <person name="Cherry J.L."/>
            <person name="DiCuccio M."/>
            <person name="Hlavina W."/>
            <person name="Kapustin Y."/>
            <person name="Meric P."/>
            <person name="Maglott D."/>
            <person name="Birtle Z."/>
            <person name="Marques A.C."/>
            <person name="Graves T."/>
            <person name="Zhou S."/>
            <person name="Teague B."/>
            <person name="Potamousis K."/>
            <person name="Churas C."/>
            <person name="Place M."/>
            <person name="Herschleb J."/>
            <person name="Runnheim R."/>
            <person name="Forrest D."/>
            <person name="Amos-Landgraf J."/>
            <person name="Schwartz D.C."/>
            <person name="Cheng Z."/>
            <person name="Lindblad-Toh K."/>
            <person name="Eichler E.E."/>
            <person name="Ponting C.P."/>
        </authorList>
    </citation>
    <scope>NUCLEOTIDE SEQUENCE [LARGE SCALE GENOMIC DNA]</scope>
    <source>
        <strain>C57BL/6J</strain>
    </source>
</reference>
<reference evidence="10 11" key="3">
    <citation type="journal article" date="2004" name="Genome Res.">
        <title>The status, quality, and expansion of the NIH full-length cDNA project: the Mammalian Gene Collection (MGC).</title>
        <authorList>
            <consortium name="The MGC Project Team"/>
        </authorList>
    </citation>
    <scope>NUCLEOTIDE SEQUENCE [LARGE SCALE MRNA] OF 85-993 (ISOFORM 2)</scope>
    <source>
        <strain evidence="11">C57BL/6J</strain>
        <tissue evidence="11">Brain</tissue>
    </source>
</reference>
<reference key="4">
    <citation type="journal article" date="2021" name="Am. J. Hum. Genet.">
        <title>SCUBE3 loss-of-function causes a recognizable recessive developmental disorder due to defective bone morphogenetic protein signaling.</title>
        <authorList>
            <consortium name="Genomics England Research Consortium"/>
            <person name="Lin Y.C."/>
            <person name="Niceta M."/>
            <person name="Muto V."/>
            <person name="Vona B."/>
            <person name="Pagnamenta A.T."/>
            <person name="Maroofian R."/>
            <person name="Beetz C."/>
            <person name="van Duyvenvoorde H."/>
            <person name="Dentici M.L."/>
            <person name="Lauffer P."/>
            <person name="Vallian S."/>
            <person name="Ciolfi A."/>
            <person name="Pizzi S."/>
            <person name="Bauer P."/>
            <person name="Gruening N.M."/>
            <person name="Bellacchio E."/>
            <person name="Del Fattore A."/>
            <person name="Petrini S."/>
            <person name="Shaheen R."/>
            <person name="Tiosano D."/>
            <person name="Halloun R."/>
            <person name="Pode-Shakked B."/>
            <person name="Albayrak H.M."/>
            <person name="Isik E."/>
            <person name="Wit J.M."/>
            <person name="Dittrich M."/>
            <person name="Freire B.L."/>
            <person name="Bertola D.R."/>
            <person name="Jorge A.A.L."/>
            <person name="Barel O."/>
            <person name="Sabir A.H."/>
            <person name="Al Tenaiji A.M.J."/>
            <person name="Taji S.M."/>
            <person name="Al-Sannaa N."/>
            <person name="Al-Abdulwahed H."/>
            <person name="Digilio M.C."/>
            <person name="Irving M."/>
            <person name="Anikster Y."/>
            <person name="Bhavani G.S.L."/>
            <person name="Girisha K.M."/>
            <person name="Haaf T."/>
            <person name="Taylor J.C."/>
            <person name="Dallapiccola B."/>
            <person name="Alkuraya F.S."/>
            <person name="Yang R.B."/>
            <person name="Tartaglia M."/>
        </authorList>
    </citation>
    <scope>FUNCTION</scope>
    <scope>DISRUPTION PHENOTYPE</scope>
</reference>
<evidence type="ECO:0000250" key="1"/>
<evidence type="ECO:0000250" key="2">
    <source>
        <dbReference type="UniProtKB" id="Q8IX30"/>
    </source>
</evidence>
<evidence type="ECO:0000255" key="3"/>
<evidence type="ECO:0000255" key="4">
    <source>
        <dbReference type="PROSITE-ProRule" id="PRU00059"/>
    </source>
</evidence>
<evidence type="ECO:0000255" key="5">
    <source>
        <dbReference type="PROSITE-ProRule" id="PRU00076"/>
    </source>
</evidence>
<evidence type="ECO:0000269" key="6">
    <source>
    </source>
</evidence>
<evidence type="ECO:0000269" key="7">
    <source>
    </source>
</evidence>
<evidence type="ECO:0000269" key="8">
    <source>
    </source>
</evidence>
<evidence type="ECO:0000303" key="9">
    <source>
    </source>
</evidence>
<evidence type="ECO:0000305" key="10"/>
<evidence type="ECO:0000312" key="11">
    <source>
        <dbReference type="EMBL" id="AAH79849.1"/>
    </source>
</evidence>
<evidence type="ECO:0000312" key="12">
    <source>
        <dbReference type="EMBL" id="AAU08348.1"/>
    </source>
</evidence>
<evidence type="ECO:0000312" key="13">
    <source>
        <dbReference type="MGI" id="MGI:3045253"/>
    </source>
</evidence>
<dbReference type="EMBL" id="AY639609">
    <property type="protein sequence ID" value="AAU08348.1"/>
    <property type="molecule type" value="mRNA"/>
</dbReference>
<dbReference type="EMBL" id="CT009658">
    <property type="status" value="NOT_ANNOTATED_CDS"/>
    <property type="molecule type" value="Genomic_DNA"/>
</dbReference>
<dbReference type="EMBL" id="BC079849">
    <property type="protein sequence ID" value="AAH79849.1"/>
    <property type="molecule type" value="mRNA"/>
</dbReference>
<dbReference type="CCDS" id="CCDS37527.1">
    <molecule id="Q66PY1-1"/>
</dbReference>
<dbReference type="RefSeq" id="NP_001004366.1">
    <molecule id="Q66PY1-1"/>
    <property type="nucleotide sequence ID" value="NM_001004366.2"/>
</dbReference>
<dbReference type="RefSeq" id="XP_011244779.1">
    <property type="nucleotide sequence ID" value="XM_011246477.1"/>
</dbReference>
<dbReference type="BioGRID" id="234583">
    <property type="interactions" value="3"/>
</dbReference>
<dbReference type="FunCoup" id="Q66PY1">
    <property type="interactions" value="163"/>
</dbReference>
<dbReference type="STRING" id="10090.ENSMUSP00000038366"/>
<dbReference type="GlyConnect" id="2713">
    <property type="glycosylation" value="1 N-Linked glycan (1 site)"/>
</dbReference>
<dbReference type="GlyCosmos" id="Q66PY1">
    <property type="glycosylation" value="5 sites, 1 glycan"/>
</dbReference>
<dbReference type="GlyGen" id="Q66PY1">
    <property type="glycosylation" value="5 sites, 3 N-linked glycans (3 sites)"/>
</dbReference>
<dbReference type="iPTMnet" id="Q66PY1"/>
<dbReference type="PhosphoSitePlus" id="Q66PY1"/>
<dbReference type="SwissPalm" id="Q66PY1"/>
<dbReference type="CPTAC" id="non-CPTAC-4005"/>
<dbReference type="PaxDb" id="10090-ENSMUSP00000038366"/>
<dbReference type="PeptideAtlas" id="Q66PY1"/>
<dbReference type="ProteomicsDB" id="255373">
    <molecule id="Q66PY1-1"/>
</dbReference>
<dbReference type="ProteomicsDB" id="255374">
    <molecule id="Q66PY1-2"/>
</dbReference>
<dbReference type="Antibodypedia" id="29465">
    <property type="antibodies" value="175 antibodies from 26 providers"/>
</dbReference>
<dbReference type="DNASU" id="268935"/>
<dbReference type="Ensembl" id="ENSMUST00000043503.11">
    <molecule id="Q66PY1-1"/>
    <property type="protein sequence ID" value="ENSMUSP00000038366.4"/>
    <property type="gene ID" value="ENSMUSG00000038677.15"/>
</dbReference>
<dbReference type="Ensembl" id="ENSMUST00000132670.3">
    <molecule id="Q66PY1-2"/>
    <property type="protein sequence ID" value="ENSMUSP00000117490.3"/>
    <property type="gene ID" value="ENSMUSG00000038677.15"/>
</dbReference>
<dbReference type="GeneID" id="268935"/>
<dbReference type="KEGG" id="mmu:268935"/>
<dbReference type="UCSC" id="uc008bqd.1">
    <molecule id="Q66PY1-1"/>
    <property type="organism name" value="mouse"/>
</dbReference>
<dbReference type="AGR" id="MGI:3045253"/>
<dbReference type="CTD" id="222663"/>
<dbReference type="MGI" id="MGI:3045253">
    <property type="gene designation" value="Scube3"/>
</dbReference>
<dbReference type="VEuPathDB" id="HostDB:ENSMUSG00000038677"/>
<dbReference type="eggNOG" id="KOG1217">
    <property type="taxonomic scope" value="Eukaryota"/>
</dbReference>
<dbReference type="GeneTree" id="ENSGT00940000153185"/>
<dbReference type="HOGENOM" id="CLU_013079_0_0_1"/>
<dbReference type="InParanoid" id="Q66PY1"/>
<dbReference type="OMA" id="VETTDNC"/>
<dbReference type="OrthoDB" id="4062651at2759"/>
<dbReference type="PhylomeDB" id="Q66PY1"/>
<dbReference type="TreeFam" id="TF351672"/>
<dbReference type="Reactome" id="R-MMU-1474228">
    <property type="pathway name" value="Degradation of the extracellular matrix"/>
</dbReference>
<dbReference type="BioGRID-ORCS" id="268935">
    <property type="hits" value="2 hits in 79 CRISPR screens"/>
</dbReference>
<dbReference type="PRO" id="PR:Q66PY1"/>
<dbReference type="Proteomes" id="UP000000589">
    <property type="component" value="Chromosome 17"/>
</dbReference>
<dbReference type="RNAct" id="Q66PY1">
    <property type="molecule type" value="protein"/>
</dbReference>
<dbReference type="Bgee" id="ENSMUSG00000038677">
    <property type="expression patterns" value="Expressed in floor plate of midbrain and 147 other cell types or tissues"/>
</dbReference>
<dbReference type="ExpressionAtlas" id="Q66PY1">
    <property type="expression patterns" value="baseline and differential"/>
</dbReference>
<dbReference type="GO" id="GO:0009986">
    <property type="term" value="C:cell surface"/>
    <property type="evidence" value="ECO:0000250"/>
    <property type="project" value="UniProtKB"/>
</dbReference>
<dbReference type="GO" id="GO:0005576">
    <property type="term" value="C:extracellular region"/>
    <property type="evidence" value="ECO:0007669"/>
    <property type="project" value="UniProtKB-SubCell"/>
</dbReference>
<dbReference type="GO" id="GO:0005509">
    <property type="term" value="F:calcium ion binding"/>
    <property type="evidence" value="ECO:0007669"/>
    <property type="project" value="InterPro"/>
</dbReference>
<dbReference type="GO" id="GO:0042802">
    <property type="term" value="F:identical protein binding"/>
    <property type="evidence" value="ECO:0000250"/>
    <property type="project" value="UniProtKB"/>
</dbReference>
<dbReference type="GO" id="GO:0030513">
    <property type="term" value="P:positive regulation of BMP signaling pathway"/>
    <property type="evidence" value="ECO:0000250"/>
    <property type="project" value="UniProtKB"/>
</dbReference>
<dbReference type="GO" id="GO:0045669">
    <property type="term" value="P:positive regulation of osteoblast differentiation"/>
    <property type="evidence" value="ECO:0000315"/>
    <property type="project" value="UniProtKB"/>
</dbReference>
<dbReference type="GO" id="GO:0045880">
    <property type="term" value="P:positive regulation of smoothened signaling pathway"/>
    <property type="evidence" value="ECO:0000314"/>
    <property type="project" value="MGI"/>
</dbReference>
<dbReference type="CDD" id="cd00041">
    <property type="entry name" value="CUB"/>
    <property type="match status" value="1"/>
</dbReference>
<dbReference type="CDD" id="cd00054">
    <property type="entry name" value="EGF_CA"/>
    <property type="match status" value="3"/>
</dbReference>
<dbReference type="FunFam" id="2.10.25.10:FF:000032">
    <property type="entry name" value="signal peptide, CUB and EGF-like domain-containing protein 2 isoform X1"/>
    <property type="match status" value="1"/>
</dbReference>
<dbReference type="FunFam" id="2.10.50.10:FF:000002">
    <property type="entry name" value="signal peptide, CUB and EGF-like domain-containing protein 2 isoform X1"/>
    <property type="match status" value="1"/>
</dbReference>
<dbReference type="FunFam" id="2.10.50.10:FF:000006">
    <property type="entry name" value="Signal peptide, CUB domain and EGF like domain containing 3"/>
    <property type="match status" value="1"/>
</dbReference>
<dbReference type="FunFam" id="2.10.25.10:FF:000110">
    <property type="entry name" value="Signal peptide, CUB domain and EGF-like domain-containing 1"/>
    <property type="match status" value="1"/>
</dbReference>
<dbReference type="FunFam" id="2.10.25.10:FF:000028">
    <property type="entry name" value="Signal peptide, CUB domain and EGF-like domain-containing 2"/>
    <property type="match status" value="1"/>
</dbReference>
<dbReference type="FunFam" id="2.10.25.10:FF:000030">
    <property type="entry name" value="Signal peptide, CUB domain and EGF-like domain-containing 2"/>
    <property type="match status" value="1"/>
</dbReference>
<dbReference type="FunFam" id="2.10.25.10:FF:000035">
    <property type="entry name" value="Signal peptide, CUB domain and EGF-like domain-containing 2"/>
    <property type="match status" value="1"/>
</dbReference>
<dbReference type="FunFam" id="2.10.25.10:FF:000037">
    <property type="entry name" value="Signal peptide, CUB domain and EGF-like domain-containing 2"/>
    <property type="match status" value="1"/>
</dbReference>
<dbReference type="FunFam" id="2.60.120.290:FF:000002">
    <property type="entry name" value="Signal peptide, CUB domain and EGF-like domain-containing 2"/>
    <property type="match status" value="1"/>
</dbReference>
<dbReference type="FunFam" id="2.10.25.10:FF:000124">
    <property type="entry name" value="Signal peptide, CUB domain and EGF-like domain-containing 3"/>
    <property type="match status" value="1"/>
</dbReference>
<dbReference type="FunFam" id="2.10.25.10:FF:000161">
    <property type="entry name" value="Signal peptide, CUB domain and EGF-like domain-containing 3"/>
    <property type="match status" value="1"/>
</dbReference>
<dbReference type="FunFam" id="2.10.50.10:FF:000008">
    <property type="entry name" value="Signal peptide, CUB domain and EGF-like domain-containing 3"/>
    <property type="match status" value="1"/>
</dbReference>
<dbReference type="FunFam" id="2.10.25.10:FF:000008">
    <property type="entry name" value="Signal peptide, CUB domain, EGF-like 2"/>
    <property type="match status" value="1"/>
</dbReference>
<dbReference type="Gene3D" id="2.10.25.10">
    <property type="entry name" value="Laminin"/>
    <property type="match status" value="9"/>
</dbReference>
<dbReference type="Gene3D" id="2.60.120.290">
    <property type="entry name" value="Spermadhesin, CUB domain"/>
    <property type="match status" value="1"/>
</dbReference>
<dbReference type="Gene3D" id="2.10.50.10">
    <property type="entry name" value="Tumor Necrosis Factor Receptor, subunit A, domain 2"/>
    <property type="match status" value="3"/>
</dbReference>
<dbReference type="InterPro" id="IPR026823">
    <property type="entry name" value="cEGF"/>
</dbReference>
<dbReference type="InterPro" id="IPR000859">
    <property type="entry name" value="CUB_dom"/>
</dbReference>
<dbReference type="InterPro" id="IPR001881">
    <property type="entry name" value="EGF-like_Ca-bd_dom"/>
</dbReference>
<dbReference type="InterPro" id="IPR000742">
    <property type="entry name" value="EGF-like_dom"/>
</dbReference>
<dbReference type="InterPro" id="IPR000152">
    <property type="entry name" value="EGF-type_Asp/Asn_hydroxyl_site"/>
</dbReference>
<dbReference type="InterPro" id="IPR018097">
    <property type="entry name" value="EGF_Ca-bd_CS"/>
</dbReference>
<dbReference type="InterPro" id="IPR024731">
    <property type="entry name" value="EGF_dom"/>
</dbReference>
<dbReference type="InterPro" id="IPR009030">
    <property type="entry name" value="Growth_fac_rcpt_cys_sf"/>
</dbReference>
<dbReference type="InterPro" id="IPR049883">
    <property type="entry name" value="NOTCH1_EGF-like"/>
</dbReference>
<dbReference type="InterPro" id="IPR052071">
    <property type="entry name" value="SCUB_EGF-like_domain"/>
</dbReference>
<dbReference type="InterPro" id="IPR035914">
    <property type="entry name" value="Sperma_CUB_dom_sf"/>
</dbReference>
<dbReference type="InterPro" id="IPR011641">
    <property type="entry name" value="Tyr-kin_ephrin_A/B_rcpt-like"/>
</dbReference>
<dbReference type="PANTHER" id="PTHR24046">
    <property type="entry name" value="SIGNAL PEPTIDE, CUB AND EGF-LIKE DOMAIN-CONTAINING"/>
    <property type="match status" value="1"/>
</dbReference>
<dbReference type="PANTHER" id="PTHR24046:SF2">
    <property type="entry name" value="SIGNAL PEPTIDE, CUB AND EGF-LIKE DOMAIN-CONTAINING PROTEIN 3"/>
    <property type="match status" value="1"/>
</dbReference>
<dbReference type="Pfam" id="PF12662">
    <property type="entry name" value="cEGF"/>
    <property type="match status" value="1"/>
</dbReference>
<dbReference type="Pfam" id="PF00431">
    <property type="entry name" value="CUB"/>
    <property type="match status" value="1"/>
</dbReference>
<dbReference type="Pfam" id="PF12947">
    <property type="entry name" value="EGF_3"/>
    <property type="match status" value="1"/>
</dbReference>
<dbReference type="Pfam" id="PF07645">
    <property type="entry name" value="EGF_CA"/>
    <property type="match status" value="2"/>
</dbReference>
<dbReference type="Pfam" id="PF07699">
    <property type="entry name" value="Ephrin_rec_like"/>
    <property type="match status" value="3"/>
</dbReference>
<dbReference type="Pfam" id="PF14670">
    <property type="entry name" value="FXa_inhibition"/>
    <property type="match status" value="3"/>
</dbReference>
<dbReference type="SMART" id="SM00042">
    <property type="entry name" value="CUB"/>
    <property type="match status" value="1"/>
</dbReference>
<dbReference type="SMART" id="SM00181">
    <property type="entry name" value="EGF"/>
    <property type="match status" value="10"/>
</dbReference>
<dbReference type="SMART" id="SM00179">
    <property type="entry name" value="EGF_CA"/>
    <property type="match status" value="8"/>
</dbReference>
<dbReference type="SMART" id="SM01411">
    <property type="entry name" value="Ephrin_rec_like"/>
    <property type="match status" value="4"/>
</dbReference>
<dbReference type="SUPFAM" id="SSF57196">
    <property type="entry name" value="EGF/Laminin"/>
    <property type="match status" value="3"/>
</dbReference>
<dbReference type="SUPFAM" id="SSF57184">
    <property type="entry name" value="Growth factor receptor domain"/>
    <property type="match status" value="3"/>
</dbReference>
<dbReference type="SUPFAM" id="SSF49854">
    <property type="entry name" value="Spermadhesin, CUB domain"/>
    <property type="match status" value="1"/>
</dbReference>
<dbReference type="PROSITE" id="PS00010">
    <property type="entry name" value="ASX_HYDROXYL"/>
    <property type="match status" value="6"/>
</dbReference>
<dbReference type="PROSITE" id="PS01180">
    <property type="entry name" value="CUB"/>
    <property type="match status" value="1"/>
</dbReference>
<dbReference type="PROSITE" id="PS01186">
    <property type="entry name" value="EGF_2"/>
    <property type="match status" value="7"/>
</dbReference>
<dbReference type="PROSITE" id="PS50026">
    <property type="entry name" value="EGF_3"/>
    <property type="match status" value="6"/>
</dbReference>
<dbReference type="PROSITE" id="PS01187">
    <property type="entry name" value="EGF_CA"/>
    <property type="match status" value="6"/>
</dbReference>
<gene>
    <name evidence="13" type="primary">Scube3</name>
</gene>
<protein>
    <recommendedName>
        <fullName>Signal peptide, CUB and EGF-like domain-containing protein 3</fullName>
    </recommendedName>
</protein>
<name>SCUB3_MOUSE</name>
<proteinExistence type="evidence at protein level"/>
<sequence length="993" mass="108984">MGSGRVPGLCLLLLLVHARAAQHGKAAQDVDECVEGTDNCHIDAICQNTPRSYKCICKSGYTGDGKHCKDVDECEREDNAGCVHDCVNIPGNYRCTCYDGFHLAHDGHNCLDVDECAEGNGGCQQSCVNMMGSYECHCRDGFFLSDNQHTCIQRPEEGMNCMNKNHGCAHICRETPKGGIACECRPGFELTKNQRDCKLTCNYGNGGCQHTCDDTEQGPRCGCHVKFVLHTDGKTCIETCAVNNGGCDSKCHDAATGVHCSCPVGFMLQPDRKTCKDIDECRLNNGGCDHICRNTVGSFECSCKKGYKLLINERSCQDIDECSFDRTCDHMCVNTPGSFQCLCHRGYLLYGVTHCGDVDECSINKGGCRFGCINTPGSYQCTCPAGQGRLHWNGKDCTEPVKCQSSLGASKAMLSCNRSGKKDTCALTCPSRARFLPESENGFTVSCGTPSPKAAPARVIHSGNSTVSSSCHEAAVLPVKQRASFKIKDAKCRLHLRNKGKAEEASRILGPGSVPCSDCLVTFIHLKCDSSRKGKGRRARTPPGKEVTRLTLELEAEVRAEETTAGCGLPCLRQRMERRLKGSLKMLRKSINQDRFLLRLAGLDYELAHKPGLGAGDRAELVEVCRPGQHRAGTKCVSCPQGTYYHGQTEQCVPCPAGTFQEREGQLSCDLCPGSDAHGPLGATNVTTCAGQCPPGHHSGDGFKPCQPCPRGTYQPEAGRTLCFPCGGGLTTKHEGAVSFQDCDTKVQCSPGHYYNTSIHRCIRCAVGSYQPDFRQNFCTRCPGNTSTDFDGSTSVAQCKNRQCGGELGEFTGYIESPNYPGNYPAGVECVWNINPPPKRKILIVVPEIFLPSEDECGDVLVMRKNSSPSSITTYETCQTYERPIAFTARSRKLWINFKTSEANSARGFQIPYVTYDEDYEQLVEDIVRDGRLYASENHQEILKDKKLIKAFFEVLAHPQNYFKYTEKHKEMLPKSFIKLLRSKVSSFLRPYK</sequence>
<keyword id="KW-0025">Alternative splicing</keyword>
<keyword id="KW-0106">Calcium</keyword>
<keyword id="KW-1015">Disulfide bond</keyword>
<keyword id="KW-0245">EGF-like domain</keyword>
<keyword id="KW-0325">Glycoprotein</keyword>
<keyword id="KW-1185">Reference proteome</keyword>
<keyword id="KW-0677">Repeat</keyword>
<keyword id="KW-0964">Secreted</keyword>
<keyword id="KW-0732">Signal</keyword>
<organism>
    <name type="scientific">Mus musculus</name>
    <name type="common">Mouse</name>
    <dbReference type="NCBI Taxonomy" id="10090"/>
    <lineage>
        <taxon>Eukaryota</taxon>
        <taxon>Metazoa</taxon>
        <taxon>Chordata</taxon>
        <taxon>Craniata</taxon>
        <taxon>Vertebrata</taxon>
        <taxon>Euteleostomi</taxon>
        <taxon>Mammalia</taxon>
        <taxon>Eutheria</taxon>
        <taxon>Euarchontoglires</taxon>
        <taxon>Glires</taxon>
        <taxon>Rodentia</taxon>
        <taxon>Myomorpha</taxon>
        <taxon>Muroidea</taxon>
        <taxon>Muridae</taxon>
        <taxon>Murinae</taxon>
        <taxon>Mus</taxon>
        <taxon>Mus</taxon>
    </lineage>
</organism>
<accession>Q66PY1</accession>
<accession>B2KF22</accession>
<accession>Q68FG9</accession>
<feature type="signal peptide" evidence="3">
    <location>
        <begin position="1"/>
        <end position="20"/>
    </location>
</feature>
<feature type="chain" id="PRO_0000250617" description="Signal peptide, CUB and EGF-like domain-containing protein 3" evidence="3">
    <location>
        <begin position="21"/>
        <end position="993"/>
    </location>
</feature>
<feature type="domain" description="EGF-like 1; calcium-binding" evidence="5">
    <location>
        <begin position="29"/>
        <end position="69"/>
    </location>
</feature>
<feature type="domain" description="EGF-like 2; calcium-binding" evidence="5">
    <location>
        <begin position="70"/>
        <end position="111"/>
    </location>
</feature>
<feature type="domain" description="EGF-like 3; calcium-binding" evidence="5">
    <location>
        <begin position="112"/>
        <end position="148"/>
    </location>
</feature>
<feature type="domain" description="EGF-like 4" evidence="5">
    <location>
        <begin position="157"/>
        <end position="198"/>
    </location>
</feature>
<feature type="domain" description="EGF-like 5" evidence="5">
    <location>
        <begin position="199"/>
        <end position="237"/>
    </location>
</feature>
<feature type="domain" description="EGF-like 6" evidence="5">
    <location>
        <begin position="238"/>
        <end position="276"/>
    </location>
</feature>
<feature type="domain" description="EGF-like 7; calcium-binding" evidence="5">
    <location>
        <begin position="277"/>
        <end position="317"/>
    </location>
</feature>
<feature type="domain" description="EGF-like 8; calcium-binding" evidence="5">
    <location>
        <begin position="318"/>
        <end position="356"/>
    </location>
</feature>
<feature type="domain" description="EGF-like 9; calcium-binding" evidence="5">
    <location>
        <begin position="357"/>
        <end position="398"/>
    </location>
</feature>
<feature type="domain" description="CUB" evidence="4">
    <location>
        <begin position="804"/>
        <end position="916"/>
    </location>
</feature>
<feature type="glycosylation site" description="N-linked (GlcNAc...) asparagine" evidence="3">
    <location>
        <position position="417"/>
    </location>
</feature>
<feature type="glycosylation site" description="N-linked (GlcNAc...) asparagine" evidence="3">
    <location>
        <position position="464"/>
    </location>
</feature>
<feature type="glycosylation site" description="N-linked (GlcNAc...) asparagine" evidence="3">
    <location>
        <position position="685"/>
    </location>
</feature>
<feature type="glycosylation site" description="N-linked (GlcNAc...) asparagine" evidence="3">
    <location>
        <position position="756"/>
    </location>
</feature>
<feature type="glycosylation site" description="N-linked (GlcNAc...) asparagine" evidence="3">
    <location>
        <position position="785"/>
    </location>
</feature>
<feature type="disulfide bond" evidence="3">
    <location>
        <begin position="33"/>
        <end position="46"/>
    </location>
</feature>
<feature type="disulfide bond" evidence="3">
    <location>
        <begin position="40"/>
        <end position="55"/>
    </location>
</feature>
<feature type="disulfide bond" evidence="3">
    <location>
        <begin position="57"/>
        <end position="68"/>
    </location>
</feature>
<feature type="disulfide bond" evidence="3">
    <location>
        <begin position="74"/>
        <end position="86"/>
    </location>
</feature>
<feature type="disulfide bond" evidence="3">
    <location>
        <begin position="82"/>
        <end position="95"/>
    </location>
</feature>
<feature type="disulfide bond" evidence="3">
    <location>
        <begin position="97"/>
        <end position="110"/>
    </location>
</feature>
<feature type="disulfide bond" evidence="3">
    <location>
        <begin position="116"/>
        <end position="127"/>
    </location>
</feature>
<feature type="disulfide bond" evidence="3">
    <location>
        <begin position="123"/>
        <end position="136"/>
    </location>
</feature>
<feature type="disulfide bond" evidence="3">
    <location>
        <begin position="161"/>
        <end position="172"/>
    </location>
</feature>
<feature type="disulfide bond" evidence="3">
    <location>
        <begin position="168"/>
        <end position="182"/>
    </location>
</feature>
<feature type="disulfide bond" evidence="3">
    <location>
        <begin position="184"/>
        <end position="197"/>
    </location>
</feature>
<feature type="disulfide bond" evidence="3">
    <location>
        <begin position="201"/>
        <end position="212"/>
    </location>
</feature>
<feature type="disulfide bond" evidence="3">
    <location>
        <begin position="208"/>
        <end position="221"/>
    </location>
</feature>
<feature type="disulfide bond" evidence="3">
    <location>
        <begin position="223"/>
        <end position="236"/>
    </location>
</feature>
<feature type="disulfide bond" evidence="3">
    <location>
        <begin position="240"/>
        <end position="251"/>
    </location>
</feature>
<feature type="disulfide bond" evidence="3">
    <location>
        <begin position="247"/>
        <end position="260"/>
    </location>
</feature>
<feature type="disulfide bond" evidence="3">
    <location>
        <begin position="262"/>
        <end position="275"/>
    </location>
</feature>
<feature type="disulfide bond" evidence="3">
    <location>
        <begin position="281"/>
        <end position="292"/>
    </location>
</feature>
<feature type="disulfide bond" evidence="3">
    <location>
        <begin position="288"/>
        <end position="301"/>
    </location>
</feature>
<feature type="disulfide bond" evidence="3">
    <location>
        <begin position="303"/>
        <end position="316"/>
    </location>
</feature>
<feature type="disulfide bond" evidence="3">
    <location>
        <begin position="322"/>
        <end position="332"/>
    </location>
</feature>
<feature type="disulfide bond" evidence="3">
    <location>
        <begin position="328"/>
        <end position="341"/>
    </location>
</feature>
<feature type="disulfide bond" evidence="3">
    <location>
        <begin position="343"/>
        <end position="355"/>
    </location>
</feature>
<feature type="disulfide bond" evidence="3">
    <location>
        <begin position="361"/>
        <end position="372"/>
    </location>
</feature>
<feature type="disulfide bond" evidence="3">
    <location>
        <begin position="368"/>
        <end position="381"/>
    </location>
</feature>
<feature type="disulfide bond" evidence="3">
    <location>
        <begin position="383"/>
        <end position="397"/>
    </location>
</feature>
<feature type="disulfide bond" evidence="3">
    <location>
        <begin position="804"/>
        <end position="830"/>
    </location>
</feature>
<feature type="disulfide bond" evidence="3">
    <location>
        <begin position="857"/>
        <end position="878"/>
    </location>
</feature>
<feature type="splice variant" id="VSP_052168" description="In isoform 2." evidence="9">
    <location>
        <begin position="637"/>
        <end position="690"/>
    </location>
</feature>
<feature type="splice variant" id="VSP_052169" description="In isoform 2." evidence="9">
    <original>DKKLIKAFFEVLAHPQNYFKYTEKHKEMLPKSFIKLLRSKVSSFLRPYK</original>
    <variation>ASERSLWCGWKWVCTDVQANC</variation>
    <location>
        <begin position="945"/>
        <end position="993"/>
    </location>
</feature>
<comment type="function">
    <text evidence="2 8">Is a positive regulator of the BMP signaling pathway, required for proper chondrogenesis, osteogenesis and skeletal development (PubMed:33308444). It acts as a coreceptor for BMP ligands, particularly BMP2 and BMP4, facilitating their interactions with BMP type I receptors (By similarity). It is required for ligand-induced recruitment of BMP receptors to lipid rafts (PubMed:33308444). Binds to TGFBR2 and activates TGFB signaling (By similarity).</text>
</comment>
<comment type="subunit">
    <text evidence="2">Forms homooligomers. Forms heterooligomers with SCUBE1 and SCUBE2. Interacts with TGFBR2 through the CUB domain; this interaction does not affect TGFB1-binding to TGFBR2. Interacts with BMP2, BMP4 and BMP7; the interaction is mediated by the CUB domain. Interacts with BMPR1A, BMPR1B and BMPR2; the interaction with BMPR1A and BMPR1B is BMP2- and BMP4-dependent.</text>
</comment>
<comment type="subcellular location">
    <subcellularLocation>
        <location evidence="2">Secreted</location>
    </subcellularLocation>
    <subcellularLocation>
        <location evidence="2">Cell surface</location>
    </subcellularLocation>
</comment>
<comment type="alternative products">
    <event type="alternative splicing"/>
    <isoform>
        <id>Q66PY1-1</id>
        <name evidence="6">1</name>
        <sequence type="displayed"/>
    </isoform>
    <isoform>
        <id>Q66PY1-2</id>
        <name evidence="7">2</name>
        <sequence type="described" ref="VSP_052168 VSP_052169"/>
    </isoform>
</comment>
<comment type="tissue specificity">
    <text evidence="6">Highly expressed in femur and humerus with little or no expression in non-bone tissues.</text>
</comment>
<comment type="PTM">
    <text evidence="6">N-glycosylated.</text>
</comment>
<comment type="PTM">
    <text evidence="1">Proteolytic cleavage produces a CUB-containing C-terminal fragment that retains the ability to bind to TGFBR2. This reaction is catalyzed in vitro by MMP2 and, to a lesser extent, by MMP9 (By similarity).</text>
</comment>
<comment type="disruption phenotype">
    <text evidence="8">Knockout mice are viable and do not show any macroscopically visible abnormality at birth. At day P1, however, knockout mice are shorter than their control littermates, and show misaligned upper/lower incisors and altered craniofacial development. All appendicular (forelimbs and hindlimbs) and axial (skull, vertebral column, and rib cage) skeletal elements are smaller than in control animals. The defective skeletal growth persists up to adulthood.</text>
</comment>